<keyword id="KW-0024">Alternative initiation</keyword>
<keyword id="KW-0037">Angiogenesis</keyword>
<keyword id="KW-0217">Developmental protein</keyword>
<keyword id="KW-0221">Differentiation</keyword>
<keyword id="KW-0903">Direct protein sequencing</keyword>
<keyword id="KW-0339">Growth factor</keyword>
<keyword id="KW-0358">Heparin-binding</keyword>
<keyword id="KW-1017">Isopeptide bond</keyword>
<keyword id="KW-0488">Methylation</keyword>
<keyword id="KW-0497">Mitogen</keyword>
<keyword id="KW-0539">Nucleus</keyword>
<keyword id="KW-0597">Phosphoprotein</keyword>
<keyword id="KW-1185">Reference proteome</keyword>
<keyword id="KW-0964">Secreted</keyword>
<keyword id="KW-0832">Ubl conjugation</keyword>
<reference key="1">
    <citation type="journal article" date="1989" name="Biochem. Biophys. Res. Commun.">
        <title>An amino-terminally extended and post-translationally modified form of a 25kD basic fibroblast growth factor.</title>
        <authorList>
            <person name="Sommer A."/>
            <person name="Moscatelli D."/>
            <person name="Rifkin D.B."/>
        </authorList>
    </citation>
    <scope>PROTEIN SEQUENCE OF N-TERMINUS</scope>
    <scope>PARTIAL PROTEIN SEQUENCE</scope>
    <scope>ALTERNATIVE INITIATION</scope>
</reference>
<reference key="2">
    <citation type="submission" date="1996-01" db="EMBL/GenBank/DDBJ databases">
        <authorList>
            <person name="Ricciardelli C."/>
        </authorList>
    </citation>
    <scope>NUCLEOTIDE SEQUENCE [MRNA] OF 53-170</scope>
    <source>
        <tissue>Prostate</tissue>
    </source>
</reference>
<reference key="3">
    <citation type="journal article" date="1991" name="Cell Regul.">
        <title>Direct evidence for methylation of arginine residues in high molecular weight forms of basic fibroblast growth factor.</title>
        <authorList>
            <person name="Burgess W.H."/>
            <person name="Bizik J."/>
            <person name="Mehlman T."/>
            <person name="Quarto N."/>
            <person name="Rifkin D.B."/>
        </authorList>
    </citation>
    <scope>PARTIAL PROTEIN SEQUENCE</scope>
    <scope>METHYLATION AT ARG-4; ARG-6 AND ARG-8</scope>
</reference>
<reference key="4">
    <citation type="journal article" date="1987" name="Proc. Natl. Acad. Sci. U.S.A.">
        <title>Mr 25,000 heparin-binding protein from guinea pig brain is a high molecular weight form of basic fibroblast growth factor.</title>
        <authorList>
            <person name="Moscatelli D."/>
            <person name="Joseph-Silverstein J."/>
            <person name="Manejias R."/>
            <person name="Rifkin D.B."/>
        </authorList>
    </citation>
    <scope>CHARACTERIZATION</scope>
    <source>
        <tissue>Brain</tissue>
    </source>
</reference>
<name>FGF2_CAVPO</name>
<protein>
    <recommendedName>
        <fullName>Fibroblast growth factor 2</fullName>
        <shortName>FGF-2</shortName>
    </recommendedName>
    <alternativeName>
        <fullName>Basic fibroblast growth factor</fullName>
        <shortName>bFGF</shortName>
    </alternativeName>
    <alternativeName>
        <fullName>Heparin-binding growth factor 2</fullName>
        <shortName>HBGF-2</shortName>
    </alternativeName>
    <alternativeName>
        <fullName>Prostatic growth factor</fullName>
    </alternativeName>
</protein>
<evidence type="ECO:0000250" key="1"/>
<evidence type="ECO:0000250" key="2">
    <source>
        <dbReference type="UniProtKB" id="P09038"/>
    </source>
</evidence>
<evidence type="ECO:0000250" key="3">
    <source>
        <dbReference type="UniProtKB" id="P13109"/>
    </source>
</evidence>
<evidence type="ECO:0000250" key="4">
    <source>
        <dbReference type="UniProtKB" id="P15655"/>
    </source>
</evidence>
<evidence type="ECO:0000256" key="5">
    <source>
        <dbReference type="SAM" id="MobiDB-lite"/>
    </source>
</evidence>
<evidence type="ECO:0000269" key="6">
    <source>
    </source>
</evidence>
<evidence type="ECO:0000305" key="7"/>
<proteinExistence type="evidence at protein level"/>
<organism>
    <name type="scientific">Cavia porcellus</name>
    <name type="common">Guinea pig</name>
    <dbReference type="NCBI Taxonomy" id="10141"/>
    <lineage>
        <taxon>Eukaryota</taxon>
        <taxon>Metazoa</taxon>
        <taxon>Chordata</taxon>
        <taxon>Craniata</taxon>
        <taxon>Vertebrata</taxon>
        <taxon>Euteleostomi</taxon>
        <taxon>Mammalia</taxon>
        <taxon>Eutheria</taxon>
        <taxon>Euarchontoglires</taxon>
        <taxon>Glires</taxon>
        <taxon>Rodentia</taxon>
        <taxon>Hystricomorpha</taxon>
        <taxon>Caviidae</taxon>
        <taxon>Cavia</taxon>
    </lineage>
</organism>
<feature type="chain" id="PRO_0000008930" description="Fibroblast growth factor 2">
    <location>
        <begin position="1" status="less than"/>
        <end position="170"/>
    </location>
</feature>
<feature type="region of interest" description="Disordered" evidence="5">
    <location>
        <begin position="1"/>
        <end position="21"/>
    </location>
</feature>
<feature type="region of interest" description="Heparin-binding" evidence="1">
    <location>
        <begin position="143"/>
        <end position="159"/>
    </location>
</feature>
<feature type="compositionally biased region" description="Low complexity" evidence="5">
    <location>
        <begin position="9"/>
        <end position="21"/>
    </location>
</feature>
<feature type="binding site" evidence="1">
    <location>
        <position position="51"/>
    </location>
    <ligand>
        <name>heparin</name>
        <dbReference type="ChEBI" id="CHEBI:28304"/>
    </ligand>
</feature>
<feature type="site" description="Important for interaction with integrin" evidence="2">
    <location>
        <position position="143"/>
    </location>
</feature>
<feature type="site" description="Important for interaction with integrin" evidence="2">
    <location>
        <position position="144"/>
    </location>
</feature>
<feature type="site" description="Important for interaction with integrin" evidence="2">
    <location>
        <position position="149"/>
    </location>
</feature>
<feature type="modified residue" description="Omega-N-methylarginine; alternate" evidence="6">
    <location>
        <position position="4"/>
    </location>
</feature>
<feature type="modified residue" description="Symmetric dimethylarginine; alternate" evidence="6">
    <location>
        <position position="4"/>
    </location>
</feature>
<feature type="modified residue" description="Omega-N-methylarginine; alternate" evidence="6">
    <location>
        <position position="6"/>
    </location>
</feature>
<feature type="modified residue" description="Symmetric dimethylarginine; alternate" evidence="6">
    <location>
        <position position="6"/>
    </location>
</feature>
<feature type="modified residue" description="Omega-N-methylarginine; alternate" evidence="6">
    <location>
        <position position="8"/>
    </location>
</feature>
<feature type="modified residue" description="Symmetric dimethylarginine; alternate" evidence="6">
    <location>
        <position position="8"/>
    </location>
</feature>
<feature type="modified residue" description="Phosphotyrosine; by TEC" evidence="2">
    <location>
        <position position="97"/>
    </location>
</feature>
<feature type="cross-link" description="Glycyl lysine isopeptide (Lys-Gly) (interchain with G-Cter in SUMO1)" evidence="2">
    <location>
        <position position="110"/>
    </location>
</feature>
<feature type="splice variant" id="VSP_018726" description="In isoform 2." evidence="7">
    <location>
        <begin position="1" status="less than"/>
        <end position="21"/>
    </location>
</feature>
<feature type="non-consecutive residues" evidence="7">
    <location>
        <begin position="15"/>
        <end position="16"/>
    </location>
</feature>
<feature type="non-consecutive residues" evidence="7">
    <location>
        <begin position="50"/>
        <end position="51"/>
    </location>
</feature>
<feature type="non-terminal residue">
    <location>
        <position position="1"/>
    </location>
</feature>
<accession>Q60487</accession>
<sequence length="170" mass="18354">VGGRGRGRGTAAAARREPGGAMAAGSITTLPALPEGGDGGAFAPGHFKDPNGGFFLRIHPDGRVDGVREKTDPHIKLQLQAEDRGVVSIKGVCANRYLAMKEDGRLLASKCVTDECFFFERLESNNYNTYRSRKYSSWYVALKRTGQYKLGSKTGPGQKAILFLPMSAKS</sequence>
<gene>
    <name type="primary">FGF2</name>
</gene>
<dbReference type="EMBL" id="L75974">
    <property type="protein sequence ID" value="AAA85394.1"/>
    <property type="status" value="ALT_FRAME"/>
    <property type="molecule type" value="mRNA"/>
</dbReference>
<dbReference type="SMR" id="Q60487"/>
<dbReference type="FunCoup" id="Q60487">
    <property type="interactions" value="1446"/>
</dbReference>
<dbReference type="STRING" id="10141.ENSCPOP00000004847"/>
<dbReference type="iPTMnet" id="Q60487"/>
<dbReference type="eggNOG" id="KOG3885">
    <property type="taxonomic scope" value="Eukaryota"/>
</dbReference>
<dbReference type="InParanoid" id="Q60487"/>
<dbReference type="Proteomes" id="UP000005447">
    <property type="component" value="Unassembled WGS sequence"/>
</dbReference>
<dbReference type="GO" id="GO:0005576">
    <property type="term" value="C:extracellular region"/>
    <property type="evidence" value="ECO:0007669"/>
    <property type="project" value="UniProtKB-SubCell"/>
</dbReference>
<dbReference type="GO" id="GO:0005634">
    <property type="term" value="C:nucleus"/>
    <property type="evidence" value="ECO:0007669"/>
    <property type="project" value="UniProtKB-SubCell"/>
</dbReference>
<dbReference type="GO" id="GO:0008083">
    <property type="term" value="F:growth factor activity"/>
    <property type="evidence" value="ECO:0007669"/>
    <property type="project" value="UniProtKB-KW"/>
</dbReference>
<dbReference type="GO" id="GO:0008201">
    <property type="term" value="F:heparin binding"/>
    <property type="evidence" value="ECO:0007669"/>
    <property type="project" value="UniProtKB-KW"/>
</dbReference>
<dbReference type="GO" id="GO:0005178">
    <property type="term" value="F:integrin binding"/>
    <property type="evidence" value="ECO:0000250"/>
    <property type="project" value="UniProtKB"/>
</dbReference>
<dbReference type="GO" id="GO:0001525">
    <property type="term" value="P:angiogenesis"/>
    <property type="evidence" value="ECO:0007669"/>
    <property type="project" value="UniProtKB-KW"/>
</dbReference>
<dbReference type="GO" id="GO:0001658">
    <property type="term" value="P:branching involved in ureteric bud morphogenesis"/>
    <property type="evidence" value="ECO:0000250"/>
    <property type="project" value="UniProtKB"/>
</dbReference>
<dbReference type="GO" id="GO:0030154">
    <property type="term" value="P:cell differentiation"/>
    <property type="evidence" value="ECO:0007669"/>
    <property type="project" value="UniProtKB-KW"/>
</dbReference>
<dbReference type="GO" id="GO:0045766">
    <property type="term" value="P:positive regulation of angiogenesis"/>
    <property type="evidence" value="ECO:0000250"/>
    <property type="project" value="UniProtKB"/>
</dbReference>
<dbReference type="GO" id="GO:0043536">
    <property type="term" value="P:positive regulation of blood vessel endothelial cell migration"/>
    <property type="evidence" value="ECO:0000250"/>
    <property type="project" value="UniProtKB"/>
</dbReference>
<dbReference type="GO" id="GO:0051781">
    <property type="term" value="P:positive regulation of cell division"/>
    <property type="evidence" value="ECO:0007669"/>
    <property type="project" value="UniProtKB-KW"/>
</dbReference>
<dbReference type="GO" id="GO:0090050">
    <property type="term" value="P:positive regulation of cell migration involved in sprouting angiogenesis"/>
    <property type="evidence" value="ECO:0000250"/>
    <property type="project" value="UniProtKB"/>
</dbReference>
<dbReference type="GO" id="GO:0070374">
    <property type="term" value="P:positive regulation of ERK1 and ERK2 cascade"/>
    <property type="evidence" value="ECO:0000250"/>
    <property type="project" value="UniProtKB"/>
</dbReference>
<dbReference type="GO" id="GO:1902748">
    <property type="term" value="P:positive regulation of lens fiber cell differentiation"/>
    <property type="evidence" value="ECO:0000250"/>
    <property type="project" value="UniProtKB"/>
</dbReference>
<dbReference type="GO" id="GO:0001934">
    <property type="term" value="P:positive regulation of protein phosphorylation"/>
    <property type="evidence" value="ECO:0000250"/>
    <property type="project" value="UniProtKB"/>
</dbReference>
<dbReference type="GO" id="GO:1903672">
    <property type="term" value="P:positive regulation of sprouting angiogenesis"/>
    <property type="evidence" value="ECO:0000250"/>
    <property type="project" value="UniProtKB"/>
</dbReference>
<dbReference type="CDD" id="cd23314">
    <property type="entry name" value="beta-trefoil_FGF2"/>
    <property type="match status" value="1"/>
</dbReference>
<dbReference type="FunFam" id="2.80.10.50:FF:000020">
    <property type="entry name" value="Fibroblast growth factor 1"/>
    <property type="match status" value="1"/>
</dbReference>
<dbReference type="Gene3D" id="2.80.10.50">
    <property type="match status" value="1"/>
</dbReference>
<dbReference type="InterPro" id="IPR002209">
    <property type="entry name" value="Fibroblast_GF_fam"/>
</dbReference>
<dbReference type="InterPro" id="IPR008996">
    <property type="entry name" value="IL1/FGF"/>
</dbReference>
<dbReference type="PANTHER" id="PTHR11486">
    <property type="entry name" value="FIBROBLAST GROWTH FACTOR"/>
    <property type="match status" value="1"/>
</dbReference>
<dbReference type="Pfam" id="PF00167">
    <property type="entry name" value="FGF"/>
    <property type="match status" value="1"/>
</dbReference>
<dbReference type="PRINTS" id="PR00263">
    <property type="entry name" value="HBGFFGF"/>
</dbReference>
<dbReference type="PRINTS" id="PR00262">
    <property type="entry name" value="IL1HBGF"/>
</dbReference>
<dbReference type="SMART" id="SM00442">
    <property type="entry name" value="FGF"/>
    <property type="match status" value="1"/>
</dbReference>
<dbReference type="SUPFAM" id="SSF50353">
    <property type="entry name" value="Cytokine"/>
    <property type="match status" value="1"/>
</dbReference>
<dbReference type="PROSITE" id="PS00247">
    <property type="entry name" value="HBGF_FGF"/>
    <property type="match status" value="1"/>
</dbReference>
<comment type="function">
    <text evidence="2">Acts as a ligand for FGFR1, FGFR2, FGFR3 and FGFR4 (By similarity). Also acts as an integrin ligand which is required for FGF2 signaling (By similarity). Binds to integrin ITGAV:ITGB3 (By similarity). Plays an important role in the regulation of cell survival, cell division, cell differentiation and cell migration (By similarity). Functions as a potent mitogen in vitro (By similarity). Can induce angiogenesis (By similarity). Mediates phosphorylation of ERK1/2 and thereby promotes retinal lens fiber differentiation (By similarity).</text>
</comment>
<comment type="subunit">
    <text evidence="2 3 4">Monomer. Homodimer. Interacts with FGFR1, FGFR2, FGFR3 and FGFR4. Affinity between fibroblast growth factors (FGFs) and their receptors is increased by heparan sulfate glycosaminoglycans that function as coreceptors. Interacts with CSPG4, FGFBP1 and TEC. Found in a complex with FGFBP1, FGF1 and FGF2. Interacts with FGFBP3. Interacts with integrin ITGAV:ITGB3; the interaction is required for FGF2 signaling. Interacts with SNORC (via the extracellular domain). Interacts with glypican GPC3.</text>
</comment>
<comment type="subcellular location">
    <subcellularLocation>
        <location evidence="2">Secreted</location>
    </subcellularLocation>
    <subcellularLocation>
        <location evidence="2">Nucleus</location>
    </subcellularLocation>
    <text evidence="2">Exported from cells by an endoplasmic reticulum (ER)/Golgi-independent mechanism (By similarity). Unconventional secretion of FGF2 occurs by direct translocation across the plasma membrane (By similarity). Binding of exogenous FGF2 to FGFR facilitates endocytosis followed by translocation of FGF2 across endosomal membrane into the cytosol (By similarity). Nuclear import from the cytosol requires the classical nuclear import machinery, involving proteins KPNA1 and KPNB1, as well as CEP57 (By similarity).</text>
</comment>
<comment type="alternative products">
    <event type="alternative initiation"/>
    <isoform>
        <id>Q60487-1</id>
        <name>1</name>
        <name>25 kDa</name>
        <sequence type="displayed"/>
    </isoform>
    <isoform>
        <id>Q60487-2</id>
        <name>2</name>
        <name>18 kDa</name>
        <sequence type="described" ref="VSP_018726"/>
    </isoform>
</comment>
<comment type="PTM">
    <text evidence="7">The N-terminus of isoform 2 is blocked.</text>
</comment>
<comment type="PTM">
    <text evidence="1">Phosphorylation at Tyr-97 regulates FGF2 unconventional secretion.</text>
</comment>
<comment type="similarity">
    <text evidence="7">Belongs to the heparin-binding growth factors family.</text>
</comment>
<comment type="sequence caution" evidence="7">
    <conflict type="frameshift">
        <sequence resource="EMBL-CDS" id="AAA85394"/>
    </conflict>
    <text>The correction of the frameshifts allows to extend the similarity to the human sequence and is based on partial amino-acid sequencing.</text>
</comment>